<dbReference type="EC" id="3.1.-.-"/>
<dbReference type="EMBL" id="AF074613">
    <property type="protein sequence ID" value="AAC70071.1"/>
    <property type="molecule type" value="Genomic_DNA"/>
</dbReference>
<dbReference type="EMBL" id="AB011549">
    <property type="protein sequence ID" value="BAA31822.1"/>
    <property type="molecule type" value="Genomic_DNA"/>
</dbReference>
<dbReference type="PIR" id="T00303">
    <property type="entry name" value="T00303"/>
</dbReference>
<dbReference type="RefSeq" id="NP_052672.1">
    <property type="nucleotide sequence ID" value="NC_002128.1"/>
</dbReference>
<dbReference type="RefSeq" id="WP_001233853.1">
    <property type="nucleotide sequence ID" value="NZ_VOAI01000049.1"/>
</dbReference>
<dbReference type="SMR" id="Q7BSX4"/>
<dbReference type="KEGG" id="ece:Z_L7003"/>
<dbReference type="KEGG" id="ecs:pO157p65"/>
<dbReference type="PATRIC" id="fig|386585.9.peg.75"/>
<dbReference type="eggNOG" id="COG1525">
    <property type="taxonomic scope" value="Bacteria"/>
</dbReference>
<dbReference type="HOGENOM" id="CLU_046484_7_3_6"/>
<dbReference type="Proteomes" id="UP000000558">
    <property type="component" value="Plasmid pO157"/>
</dbReference>
<dbReference type="Proteomes" id="UP000002519">
    <property type="component" value="Plasmid pO157"/>
</dbReference>
<dbReference type="GO" id="GO:0004519">
    <property type="term" value="F:endonuclease activity"/>
    <property type="evidence" value="ECO:0007669"/>
    <property type="project" value="UniProtKB-KW"/>
</dbReference>
<dbReference type="GO" id="GO:0003676">
    <property type="term" value="F:nucleic acid binding"/>
    <property type="evidence" value="ECO:0007669"/>
    <property type="project" value="InterPro"/>
</dbReference>
<dbReference type="CDD" id="cd00175">
    <property type="entry name" value="SNc"/>
    <property type="match status" value="1"/>
</dbReference>
<dbReference type="Gene3D" id="2.40.50.90">
    <property type="match status" value="1"/>
</dbReference>
<dbReference type="InterPro" id="IPR035437">
    <property type="entry name" value="SNase_OB-fold_sf"/>
</dbReference>
<dbReference type="InterPro" id="IPR016071">
    <property type="entry name" value="Staphylococal_nuclease_OB-fold"/>
</dbReference>
<dbReference type="InterPro" id="IPR002071">
    <property type="entry name" value="Thermonucl_AS"/>
</dbReference>
<dbReference type="PANTHER" id="PTHR12302">
    <property type="entry name" value="EBNA2 BINDING PROTEIN P100"/>
    <property type="match status" value="1"/>
</dbReference>
<dbReference type="PANTHER" id="PTHR12302:SF3">
    <property type="entry name" value="SERINE_THREONINE-PROTEIN KINASE 31"/>
    <property type="match status" value="1"/>
</dbReference>
<dbReference type="Pfam" id="PF00565">
    <property type="entry name" value="SNase"/>
    <property type="match status" value="1"/>
</dbReference>
<dbReference type="SMART" id="SM00318">
    <property type="entry name" value="SNc"/>
    <property type="match status" value="1"/>
</dbReference>
<dbReference type="SUPFAM" id="SSF50199">
    <property type="entry name" value="Staphylococcal nuclease"/>
    <property type="match status" value="1"/>
</dbReference>
<dbReference type="PROSITE" id="PS01123">
    <property type="entry name" value="TNASE_1"/>
    <property type="match status" value="1"/>
</dbReference>
<dbReference type="PROSITE" id="PS01284">
    <property type="entry name" value="TNASE_2"/>
    <property type="match status" value="1"/>
</dbReference>
<dbReference type="PROSITE" id="PS50830">
    <property type="entry name" value="TNASE_3"/>
    <property type="match status" value="1"/>
</dbReference>
<organism>
    <name type="scientific">Escherichia coli O157:H7</name>
    <dbReference type="NCBI Taxonomy" id="83334"/>
    <lineage>
        <taxon>Bacteria</taxon>
        <taxon>Pseudomonadati</taxon>
        <taxon>Pseudomonadota</taxon>
        <taxon>Gammaproteobacteria</taxon>
        <taxon>Enterobacterales</taxon>
        <taxon>Enterobacteriaceae</taxon>
        <taxon>Escherichia</taxon>
    </lineage>
</organism>
<comment type="similarity">
    <text evidence="3">Belongs to the thermonuclease family.</text>
</comment>
<feature type="signal peptide" evidence="2">
    <location>
        <begin position="1"/>
        <end position="19"/>
    </location>
</feature>
<feature type="chain" id="PRO_0000034396" description="Uncharacterized endonuclease">
    <location>
        <begin position="20"/>
        <end position="153"/>
    </location>
</feature>
<feature type="active site" evidence="1">
    <location>
        <position position="46"/>
    </location>
</feature>
<feature type="active site" evidence="1">
    <location>
        <position position="54"/>
    </location>
</feature>
<feature type="active site" evidence="1">
    <location>
        <position position="88"/>
    </location>
</feature>
<geneLocation type="plasmid">
    <name>pO157</name>
</geneLocation>
<proteinExistence type="inferred from homology"/>
<evidence type="ECO:0000250" key="1"/>
<evidence type="ECO:0000255" key="2"/>
<evidence type="ECO:0000255" key="3">
    <source>
        <dbReference type="PROSITE-ProRule" id="PRU00272"/>
    </source>
</evidence>
<reference key="1">
    <citation type="journal article" date="1998" name="Nucleic Acids Res.">
        <title>The complete DNA sequence and analysis of the large virulence plasmid of Escherichia coli O157:H7.</title>
        <authorList>
            <person name="Burland V."/>
            <person name="Shao Y."/>
            <person name="Perna N.T."/>
            <person name="Plunkett G. III"/>
            <person name="Sofia H.J."/>
            <person name="Blattner F.R."/>
        </authorList>
    </citation>
    <scope>NUCLEOTIDE SEQUENCE [LARGE SCALE GENOMIC DNA]</scope>
    <source>
        <strain>O157:H7 / EDL933 / ATCC 700927 / EHEC</strain>
    </source>
</reference>
<reference key="2">
    <citation type="journal article" date="1998" name="DNA Res.">
        <title>Complete nucleotide sequences of 93-kb and 3.3-kb plasmids of an enterohemorrhagic Escherichia coli O157:H7 derived from Sakai outbreak.</title>
        <authorList>
            <person name="Makino K."/>
            <person name="Ishii K."/>
            <person name="Yasunaga T."/>
            <person name="Hattori M."/>
            <person name="Yokoyama K."/>
            <person name="Yatsudo H.C."/>
            <person name="Kubota Y."/>
            <person name="Yamaichi Y."/>
            <person name="Iida T."/>
            <person name="Yamamoto K."/>
            <person name="Honda T."/>
            <person name="Han C.G."/>
            <person name="Ohtsubo A."/>
            <person name="Kasamatsu M."/>
            <person name="Hayashi T."/>
            <person name="Kuhara S."/>
            <person name="Shinagawa H."/>
        </authorList>
    </citation>
    <scope>NUCLEOTIDE SEQUENCE [LARGE SCALE GENOMIC DNA]</scope>
    <source>
        <strain>O157:H7 / Sakai / RIMD 0509952 / EHEC</strain>
    </source>
</reference>
<name>YFI3_ECO57</name>
<protein>
    <recommendedName>
        <fullName>Uncharacterized endonuclease</fullName>
        <ecNumber>3.1.-.-</ecNumber>
    </recommendedName>
</protein>
<sequence length="153" mass="17872">MRKYIPLVLFIFSWPVLCADIHGRVVRVLDGDTIEVMDSRKAVRIRLVNIDAPEKKQDYGRWSTDMMKSLVAGKTVTVTYFQRDRYGRMLGQVYAPDGMNVNQFMVRAGAAWVYEQYNTDPVLPVLQNEARQQKRGLWSDADPVPPWIWRHRK</sequence>
<keyword id="KW-0255">Endonuclease</keyword>
<keyword id="KW-0378">Hydrolase</keyword>
<keyword id="KW-0540">Nuclease</keyword>
<keyword id="KW-0614">Plasmid</keyword>
<keyword id="KW-1185">Reference proteome</keyword>
<keyword id="KW-0732">Signal</keyword>
<gene>
    <name type="ordered locus">L7003</name>
    <name type="ordered locus">ECO57PM65</name>
</gene>
<accession>Q7BSX4</accession>
<accession>O82923</accession>